<feature type="chain" id="PRO_0000106760" description="Coenzyme F(430) synthetase">
    <location>
        <begin position="1"/>
        <end position="404"/>
    </location>
</feature>
<feature type="binding site" evidence="2">
    <location>
        <begin position="112"/>
        <end position="117"/>
    </location>
    <ligand>
        <name>ATP</name>
        <dbReference type="ChEBI" id="CHEBI:30616"/>
    </ligand>
</feature>
<sequence>MVFFMLIIDVNHGALTLAEEYLNLGYEVDVWDIYQKIKKSEDFKVKYQKLKEKFGNKLNLFFEQPNFEKYDRVIAPIHCPIDVDFIPFTDAVSKILKEKFGNIHKKIINVTGVKGKTTTTSLINHILKDKYSTYLHNSNFGSIAPPTILKVLNSLDIDKYDFFIFETSLGLIKCKYGAITNVLENYKIAGGRKDALTAKFSSLKNAELSFINKRDINRYDLNINHKCLNVVDVDRAKILDKYPLKFKYFDEIFEFSKNIFGLHFVENSLFAIEICKNLVDMEEIRYRLKTFTIKNRMEIKEINKKILVKNINPGLDVKAISYAIKDFLEVFGGDIYIGGDFGIVCEEIDVKKLSEVLKRFNCRYIFVGEIGKELLNYLNGGYIKSYDENKIKRDSLVILREKIK</sequence>
<protein>
    <recommendedName>
        <fullName evidence="1">Coenzyme F(430) synthetase</fullName>
        <ecNumber evidence="1">6.4.1.9</ecNumber>
    </recommendedName>
</protein>
<gene>
    <name evidence="1" type="primary">cfbE</name>
    <name type="ordered locus">MJ0258</name>
</gene>
<keyword id="KW-0067">ATP-binding</keyword>
<keyword id="KW-0436">Ligase</keyword>
<keyword id="KW-0484">Methanogenesis</keyword>
<keyword id="KW-0547">Nucleotide-binding</keyword>
<keyword id="KW-1185">Reference proteome</keyword>
<accession>Q57706</accession>
<comment type="function">
    <text evidence="1">Involved in the biosynthesis of the unique nickel-containing tetrapyrrole coenzyme F430, the prosthetic group of methyl-coenzyme M reductase (MCR), which plays a key role in methanogenesis and anaerobic methane oxidation. Catalyzes the activation the g-propionate side chain of 15,17(3)-seco-F430-17(3)-acid (seco-F430) for intramolecular C-C bond formation to yield the carbocyclic F ring of coenzyme F430.</text>
</comment>
<comment type="catalytic activity">
    <reaction evidence="1">
        <text>15,17(3)-seco-F430-17(3)-acid + ATP = coenzyme F430 + ADP + phosphate</text>
        <dbReference type="Rhea" id="RHEA:52904"/>
        <dbReference type="ChEBI" id="CHEBI:30616"/>
        <dbReference type="ChEBI" id="CHEBI:43474"/>
        <dbReference type="ChEBI" id="CHEBI:60540"/>
        <dbReference type="ChEBI" id="CHEBI:136888"/>
        <dbReference type="ChEBI" id="CHEBI:456216"/>
        <dbReference type="EC" id="6.4.1.9"/>
    </reaction>
</comment>
<comment type="similarity">
    <text evidence="3">Belongs to the MurCDEF family.</text>
</comment>
<reference key="1">
    <citation type="journal article" date="1996" name="Science">
        <title>Complete genome sequence of the methanogenic archaeon, Methanococcus jannaschii.</title>
        <authorList>
            <person name="Bult C.J."/>
            <person name="White O."/>
            <person name="Olsen G.J."/>
            <person name="Zhou L."/>
            <person name="Fleischmann R.D."/>
            <person name="Sutton G.G."/>
            <person name="Blake J.A."/>
            <person name="FitzGerald L.M."/>
            <person name="Clayton R.A."/>
            <person name="Gocayne J.D."/>
            <person name="Kerlavage A.R."/>
            <person name="Dougherty B.A."/>
            <person name="Tomb J.-F."/>
            <person name="Adams M.D."/>
            <person name="Reich C.I."/>
            <person name="Overbeek R."/>
            <person name="Kirkness E.F."/>
            <person name="Weinstock K.G."/>
            <person name="Merrick J.M."/>
            <person name="Glodek A."/>
            <person name="Scott J.L."/>
            <person name="Geoghagen N.S.M."/>
            <person name="Weidman J.F."/>
            <person name="Fuhrmann J.L."/>
            <person name="Nguyen D."/>
            <person name="Utterback T.R."/>
            <person name="Kelley J.M."/>
            <person name="Peterson J.D."/>
            <person name="Sadow P.W."/>
            <person name="Hanna M.C."/>
            <person name="Cotton M.D."/>
            <person name="Roberts K.M."/>
            <person name="Hurst M.A."/>
            <person name="Kaine B.P."/>
            <person name="Borodovsky M."/>
            <person name="Klenk H.-P."/>
            <person name="Fraser C.M."/>
            <person name="Smith H.O."/>
            <person name="Woese C.R."/>
            <person name="Venter J.C."/>
        </authorList>
    </citation>
    <scope>NUCLEOTIDE SEQUENCE [LARGE SCALE GENOMIC DNA]</scope>
    <source>
        <strain>ATCC 43067 / DSM 2661 / JAL-1 / JCM 10045 / NBRC 100440</strain>
    </source>
</reference>
<dbReference type="EC" id="6.4.1.9" evidence="1"/>
<dbReference type="EMBL" id="L77117">
    <property type="protein sequence ID" value="AAB98245.1"/>
    <property type="molecule type" value="Genomic_DNA"/>
</dbReference>
<dbReference type="PIR" id="C64332">
    <property type="entry name" value="C64332"/>
</dbReference>
<dbReference type="SMR" id="Q57706"/>
<dbReference type="FunCoup" id="Q57706">
    <property type="interactions" value="110"/>
</dbReference>
<dbReference type="STRING" id="243232.MJ_0258"/>
<dbReference type="PaxDb" id="243232-MJ_0258"/>
<dbReference type="EnsemblBacteria" id="AAB98245">
    <property type="protein sequence ID" value="AAB98245"/>
    <property type="gene ID" value="MJ_0258"/>
</dbReference>
<dbReference type="KEGG" id="mja:MJ_0258"/>
<dbReference type="eggNOG" id="arCOG02822">
    <property type="taxonomic scope" value="Archaea"/>
</dbReference>
<dbReference type="HOGENOM" id="CLU_047362_0_0_2"/>
<dbReference type="InParanoid" id="Q57706"/>
<dbReference type="PhylomeDB" id="Q57706"/>
<dbReference type="Proteomes" id="UP000000805">
    <property type="component" value="Chromosome"/>
</dbReference>
<dbReference type="GO" id="GO:0016881">
    <property type="term" value="F:acid-amino acid ligase activity"/>
    <property type="evidence" value="ECO:0007669"/>
    <property type="project" value="InterPro"/>
</dbReference>
<dbReference type="GO" id="GO:0005524">
    <property type="term" value="F:ATP binding"/>
    <property type="evidence" value="ECO:0007669"/>
    <property type="project" value="UniProtKB-KW"/>
</dbReference>
<dbReference type="GO" id="GO:0015948">
    <property type="term" value="P:methanogenesis"/>
    <property type="evidence" value="ECO:0007669"/>
    <property type="project" value="UniProtKB-KW"/>
</dbReference>
<dbReference type="Gene3D" id="3.40.1190.10">
    <property type="entry name" value="Mur-like, catalytic domain"/>
    <property type="match status" value="1"/>
</dbReference>
<dbReference type="InterPro" id="IPR036565">
    <property type="entry name" value="Mur-like_cat_sf"/>
</dbReference>
<dbReference type="InterPro" id="IPR013221">
    <property type="entry name" value="Mur_ligase_cen"/>
</dbReference>
<dbReference type="InterPro" id="IPR051046">
    <property type="entry name" value="MurCDEF_CellWall_CoF430Synth"/>
</dbReference>
<dbReference type="NCBIfam" id="NF033197">
    <property type="entry name" value="F430_CfbE"/>
    <property type="match status" value="1"/>
</dbReference>
<dbReference type="PANTHER" id="PTHR43024">
    <property type="entry name" value="UDP-N-ACETYLMURAMOYL-TRIPEPTIDE--D-ALANYL-D-ALANINE LIGASE"/>
    <property type="match status" value="1"/>
</dbReference>
<dbReference type="PANTHER" id="PTHR43024:SF1">
    <property type="entry name" value="UDP-N-ACETYLMURAMOYL-TRIPEPTIDE--D-ALANYL-D-ALANINE LIGASE"/>
    <property type="match status" value="1"/>
</dbReference>
<dbReference type="Pfam" id="PF08245">
    <property type="entry name" value="Mur_ligase_M"/>
    <property type="match status" value="1"/>
</dbReference>
<dbReference type="SUPFAM" id="SSF53623">
    <property type="entry name" value="MurD-like peptide ligases, catalytic domain"/>
    <property type="match status" value="1"/>
</dbReference>
<evidence type="ECO:0000250" key="1">
    <source>
        <dbReference type="UniProtKB" id="Q8TJZ6"/>
    </source>
</evidence>
<evidence type="ECO:0000255" key="2"/>
<evidence type="ECO:0000305" key="3"/>
<proteinExistence type="inferred from homology"/>
<organism>
    <name type="scientific">Methanocaldococcus jannaschii (strain ATCC 43067 / DSM 2661 / JAL-1 / JCM 10045 / NBRC 100440)</name>
    <name type="common">Methanococcus jannaschii</name>
    <dbReference type="NCBI Taxonomy" id="243232"/>
    <lineage>
        <taxon>Archaea</taxon>
        <taxon>Methanobacteriati</taxon>
        <taxon>Methanobacteriota</taxon>
        <taxon>Methanomada group</taxon>
        <taxon>Methanococci</taxon>
        <taxon>Methanococcales</taxon>
        <taxon>Methanocaldococcaceae</taxon>
        <taxon>Methanocaldococcus</taxon>
    </lineage>
</organism>
<name>CFBE_METJA</name>